<comment type="function">
    <text>Non-catalytic subunit of the peripheral V1 complex of vacuolar ATPase. V-ATPase is responsible for acidifying a variety of intracellular compartments in eukaryotic cells.</text>
</comment>
<comment type="subunit">
    <text>V-ATPase is a heteromultimeric enzyme composed of a peripheral catalytic V1 complex (main components: subunits A, B, C, D, E, and F) attached to an integral membrane V0 proton pore complex (main component: the proteolipid protein).</text>
</comment>
<comment type="similarity">
    <text evidence="1">Belongs to the ATPase alpha/beta chains family.</text>
</comment>
<accession>Q38680</accession>
<sequence>MASAEVFKANVEAVTRDYICEPRIEYRTVGGVSGPLVVVELVKRPKFAEIVNIRLGNGTSRRGQVLEVDGNRAVVQVFEGTSGIDNRNTTLQFTGEVLSTPVSKDMLGRVFNGSGKPIDGGPTVLAEAYLDIQGSSINPSERTYPEEMSQTGVSTIDVMNSIARGQKIPLFSAAGLPHNDIAAQICRQAGLVRQKAQDSMIDAGREEEEFAIVFAAMGVNMETAHYFKQDFEENGSMEKTVLFLNLANDPTIERIITPRIALTTAEYLAYECGKHVLVILTDMSSYADALREVSAAREEVPGRRGYPGYMYTDLATIYERAGRIEGRKGSITQLPILTMPNDDITHPIPDLTGYITEGQIYVDRQLHNIQIYPPINVLPTLSRLMKSAIGEGMTRKDHSEVSNQLYDNYAIGKDVAAMKAVVGEEALSSEDLLYLEFLDKFERKFVNQGHYEARTIFDSLDLAWTLLRLFPKELLRRITAKTLEKMYERSES</sequence>
<keyword id="KW-0375">Hydrogen ion transport</keyword>
<keyword id="KW-0406">Ion transport</keyword>
<keyword id="KW-0813">Transport</keyword>
<name>VATB2_ACEAT</name>
<feature type="chain" id="PRO_0000144638" description="V-type proton ATPase subunit B 2">
    <location>
        <begin position="1"/>
        <end position="492"/>
    </location>
</feature>
<evidence type="ECO:0000305" key="1"/>
<reference key="1">
    <citation type="online journal article" date="1995" name="Plant Gene Register">
        <title>Molecular cloning of cDNAs encoding Acetabularia acetabulum V type ATPase, B subunit.</title>
        <authorList>
            <person name="Ikeda M."/>
            <person name="Konishi K."/>
            <person name="Moritani C."/>
            <person name="Kadowaki H."/>
            <person name="Rahman H."/>
            <person name="Ohmori S."/>
        </authorList>
        <locator>PGR95-043</locator>
    </citation>
    <scope>NUCLEOTIDE SEQUENCE [MRNA]</scope>
</reference>
<reference key="2">
    <citation type="online journal article" date="1996" name="Plant Gene Register">
        <title>Molecular cloning of cDNAs encoding Acetabularia acetabulum V type ATPase, A and B subunits.</title>
        <authorList>
            <person name="Ikeda M."/>
            <person name="Konishi K."/>
            <person name="Kadowaki H."/>
            <person name="Moritani C."/>
            <person name="Watanabe Y."/>
        </authorList>
        <locator>PGR96-030</locator>
    </citation>
    <scope>NUCLEOTIDE SEQUENCE [MRNA]</scope>
</reference>
<dbReference type="EMBL" id="D50531">
    <property type="protein sequence ID" value="BAA09100.1"/>
    <property type="molecule type" value="mRNA"/>
</dbReference>
<dbReference type="SMR" id="Q38680"/>
<dbReference type="GO" id="GO:0033180">
    <property type="term" value="C:proton-transporting V-type ATPase, V1 domain"/>
    <property type="evidence" value="ECO:0007669"/>
    <property type="project" value="InterPro"/>
</dbReference>
<dbReference type="GO" id="GO:0005524">
    <property type="term" value="F:ATP binding"/>
    <property type="evidence" value="ECO:0007669"/>
    <property type="project" value="InterPro"/>
</dbReference>
<dbReference type="GO" id="GO:0046961">
    <property type="term" value="F:proton-transporting ATPase activity, rotational mechanism"/>
    <property type="evidence" value="ECO:0007669"/>
    <property type="project" value="InterPro"/>
</dbReference>
<dbReference type="GO" id="GO:0046034">
    <property type="term" value="P:ATP metabolic process"/>
    <property type="evidence" value="ECO:0007669"/>
    <property type="project" value="InterPro"/>
</dbReference>
<dbReference type="GO" id="GO:0007035">
    <property type="term" value="P:vacuolar acidification"/>
    <property type="evidence" value="ECO:0007669"/>
    <property type="project" value="TreeGrafter"/>
</dbReference>
<dbReference type="CDD" id="cd18112">
    <property type="entry name" value="ATP-synt_V_A-type_beta_C"/>
    <property type="match status" value="1"/>
</dbReference>
<dbReference type="CDD" id="cd18118">
    <property type="entry name" value="ATP-synt_V_A-type_beta_N"/>
    <property type="match status" value="1"/>
</dbReference>
<dbReference type="CDD" id="cd01135">
    <property type="entry name" value="V_A-ATPase_B"/>
    <property type="match status" value="1"/>
</dbReference>
<dbReference type="FunFam" id="3.40.50.12240:FF:000001">
    <property type="entry name" value="V-type proton ATPase subunit B, brain"/>
    <property type="match status" value="1"/>
</dbReference>
<dbReference type="Gene3D" id="3.40.50.12240">
    <property type="match status" value="1"/>
</dbReference>
<dbReference type="HAMAP" id="MF_00310">
    <property type="entry name" value="ATP_synth_B_arch"/>
    <property type="match status" value="1"/>
</dbReference>
<dbReference type="InterPro" id="IPR055190">
    <property type="entry name" value="ATP-synt_VA_C"/>
</dbReference>
<dbReference type="InterPro" id="IPR004100">
    <property type="entry name" value="ATPase_F1/V1/A1_a/bsu_N"/>
</dbReference>
<dbReference type="InterPro" id="IPR000194">
    <property type="entry name" value="ATPase_F1/V1/A1_a/bsu_nucl-bd"/>
</dbReference>
<dbReference type="InterPro" id="IPR005723">
    <property type="entry name" value="ATPase_V1-cplx_bsu"/>
</dbReference>
<dbReference type="InterPro" id="IPR027417">
    <property type="entry name" value="P-loop_NTPase"/>
</dbReference>
<dbReference type="InterPro" id="IPR022879">
    <property type="entry name" value="V-ATPase_su_B/beta"/>
</dbReference>
<dbReference type="NCBIfam" id="NF003235">
    <property type="entry name" value="PRK04196.1"/>
    <property type="match status" value="1"/>
</dbReference>
<dbReference type="NCBIfam" id="TIGR01040">
    <property type="entry name" value="V-ATPase_V1_B"/>
    <property type="match status" value="1"/>
</dbReference>
<dbReference type="PANTHER" id="PTHR43389">
    <property type="entry name" value="V-TYPE PROTON ATPASE SUBUNIT B"/>
    <property type="match status" value="1"/>
</dbReference>
<dbReference type="PANTHER" id="PTHR43389:SF4">
    <property type="entry name" value="V-TYPE PROTON ATPASE SUBUNIT B"/>
    <property type="match status" value="1"/>
</dbReference>
<dbReference type="Pfam" id="PF00006">
    <property type="entry name" value="ATP-synt_ab"/>
    <property type="match status" value="1"/>
</dbReference>
<dbReference type="Pfam" id="PF02874">
    <property type="entry name" value="ATP-synt_ab_N"/>
    <property type="match status" value="1"/>
</dbReference>
<dbReference type="Pfam" id="PF22919">
    <property type="entry name" value="ATP-synt_VA_C"/>
    <property type="match status" value="1"/>
</dbReference>
<dbReference type="PIRSF" id="PIRSF039114">
    <property type="entry name" value="V-ATPsynth_beta/V-ATPase_B"/>
    <property type="match status" value="1"/>
</dbReference>
<dbReference type="SUPFAM" id="SSF52540">
    <property type="entry name" value="P-loop containing nucleoside triphosphate hydrolases"/>
    <property type="match status" value="1"/>
</dbReference>
<proteinExistence type="evidence at transcript level"/>
<organism>
    <name type="scientific">Acetabularia acetabulum</name>
    <name type="common">Mermaid's wine glass</name>
    <name type="synonym">Acetabularia mediterranea</name>
    <dbReference type="NCBI Taxonomy" id="35845"/>
    <lineage>
        <taxon>Eukaryota</taxon>
        <taxon>Viridiplantae</taxon>
        <taxon>Chlorophyta</taxon>
        <taxon>Ulvophyceae</taxon>
        <taxon>TCBD clade</taxon>
        <taxon>Dasycladales</taxon>
        <taxon>Polyphysaceae</taxon>
        <taxon>Acetabularia</taxon>
    </lineage>
</organism>
<protein>
    <recommendedName>
        <fullName>V-type proton ATPase subunit B 2</fullName>
        <shortName>V-ATPase subunit B 2</shortName>
    </recommendedName>
    <alternativeName>
        <fullName>Vacuolar proton pump subunit B 2</fullName>
    </alternativeName>
</protein>